<keyword id="KW-0012">Acyltransferase</keyword>
<keyword id="KW-0808">Transferase</keyword>
<dbReference type="EC" id="2.3.1.-"/>
<dbReference type="EMBL" id="L11348">
    <property type="protein sequence ID" value="AAA03082.1"/>
    <property type="molecule type" value="Unassigned_DNA"/>
</dbReference>
<dbReference type="SMR" id="Q05885"/>
<dbReference type="VEuPathDB" id="TriTrypDB:LdBPK_250020.1"/>
<dbReference type="VEuPathDB" id="TriTrypDB:LdCL_250005100"/>
<dbReference type="VEuPathDB" id="TriTrypDB:LDHU3_25.0030"/>
<dbReference type="GO" id="GO:0031416">
    <property type="term" value="C:NatB complex"/>
    <property type="evidence" value="ECO:0007669"/>
    <property type="project" value="TreeGrafter"/>
</dbReference>
<dbReference type="GO" id="GO:0004596">
    <property type="term" value="F:protein-N-terminal amino-acid acetyltransferase activity"/>
    <property type="evidence" value="ECO:0007669"/>
    <property type="project" value="TreeGrafter"/>
</dbReference>
<dbReference type="FunFam" id="3.40.630.30:FF:000065">
    <property type="entry name" value="N-terminal acetyltransferase complex ARD1 subunit homolog"/>
    <property type="match status" value="1"/>
</dbReference>
<dbReference type="Gene3D" id="3.40.630.30">
    <property type="match status" value="1"/>
</dbReference>
<dbReference type="InterPro" id="IPR016181">
    <property type="entry name" value="Acyl_CoA_acyltransferase"/>
</dbReference>
<dbReference type="InterPro" id="IPR000182">
    <property type="entry name" value="GNAT_dom"/>
</dbReference>
<dbReference type="InterPro" id="IPR051646">
    <property type="entry name" value="NatB_acetyltransferase_subunit"/>
</dbReference>
<dbReference type="PANTHER" id="PTHR45910">
    <property type="entry name" value="N-ALPHA-ACETYLTRANSFERASE 20"/>
    <property type="match status" value="1"/>
</dbReference>
<dbReference type="PANTHER" id="PTHR45910:SF1">
    <property type="entry name" value="N-ALPHA-ACETYLTRANSFERASE 20"/>
    <property type="match status" value="1"/>
</dbReference>
<dbReference type="Pfam" id="PF00583">
    <property type="entry name" value="Acetyltransf_1"/>
    <property type="match status" value="1"/>
</dbReference>
<dbReference type="SUPFAM" id="SSF55729">
    <property type="entry name" value="Acyl-CoA N-acyltransferases (Nat)"/>
    <property type="match status" value="1"/>
</dbReference>
<dbReference type="PROSITE" id="PS51186">
    <property type="entry name" value="GNAT"/>
    <property type="match status" value="1"/>
</dbReference>
<accession>Q05885</accession>
<organism>
    <name type="scientific">Leishmania donovani</name>
    <dbReference type="NCBI Taxonomy" id="5661"/>
    <lineage>
        <taxon>Eukaryota</taxon>
        <taxon>Discoba</taxon>
        <taxon>Euglenozoa</taxon>
        <taxon>Kinetoplastea</taxon>
        <taxon>Metakinetoplastina</taxon>
        <taxon>Trypanosomatida</taxon>
        <taxon>Trypanosomatidae</taxon>
        <taxon>Leishmaniinae</taxon>
        <taxon>Leishmania</taxon>
    </lineage>
</organism>
<comment type="function">
    <text evidence="1">Seems to be involved in N-acetylation.</text>
</comment>
<comment type="similarity">
    <text evidence="3">Belongs to the acetyltransferase family. ARD1 subfamily.</text>
</comment>
<sequence length="186" mass="21684">MTTYRRMTLCDTLQFNFVNLDQLTETYNTSFYGEYVTHWPEYQRMCVHPTTNIPMAYTLGKAEGQGEDYHGHVSAVSVAPTFRRVALGETLMAELAQMSELVHNAYFVDLFVRKSNQVAQDMYHRLGYIVYRTVLNYYHGDGPKGPFKSDEDALDMRLALRRDKERRKSSVIPLDRPIKPEELEWV</sequence>
<name>ARD1_LEIDO</name>
<feature type="chain" id="PRO_0000074531" description="N-terminal acetyltransferase complex ARD1 subunit homolog">
    <location>
        <begin position="1"/>
        <end position="186"/>
    </location>
</feature>
<feature type="domain" description="N-acetyltransferase" evidence="2">
    <location>
        <begin position="2"/>
        <end position="161"/>
    </location>
</feature>
<reference key="1">
    <citation type="journal article" date="1993" name="Proc. Natl. Acad. Sci. U.S.A.">
        <title>Isolation of virulence genes directing surface glycosyl-phosphatidylinositol synthesis by functional complementation of Leishmania.</title>
        <authorList>
            <person name="Ryan K.A."/>
            <person name="Garraway L.A."/>
            <person name="Descoteaux A."/>
            <person name="Turco S.J."/>
            <person name="Beverley S.M."/>
        </authorList>
    </citation>
    <scope>NUCLEOTIDE SEQUENCE</scope>
    <source>
        <strain>Ld4</strain>
    </source>
</reference>
<evidence type="ECO:0000250" key="1"/>
<evidence type="ECO:0000255" key="2">
    <source>
        <dbReference type="PROSITE-ProRule" id="PRU00532"/>
    </source>
</evidence>
<evidence type="ECO:0000305" key="3"/>
<protein>
    <recommendedName>
        <fullName>N-terminal acetyltransferase complex ARD1 subunit homolog</fullName>
        <ecNumber>2.3.1.-</ecNumber>
    </recommendedName>
</protein>
<proteinExistence type="inferred from homology"/>
<gene>
    <name type="primary">ARD1</name>
</gene>